<geneLocation type="chloroplast"/>
<keyword id="KW-0150">Chloroplast</keyword>
<keyword id="KW-0934">Plastid</keyword>
<keyword id="KW-0687">Ribonucleoprotein</keyword>
<keyword id="KW-0689">Ribosomal protein</keyword>
<keyword id="KW-0694">RNA-binding</keyword>
<keyword id="KW-0699">rRNA-binding</keyword>
<reference key="1">
    <citation type="submission" date="2003-11" db="EMBL/GenBank/DDBJ databases">
        <title>Whole genome sequence of Porphyra yezoensis chloroplast.</title>
        <authorList>
            <person name="Kunimoto M."/>
            <person name="Morishima K."/>
            <person name="Yoshikawa M."/>
            <person name="Fukuda S."/>
            <person name="Kobayashi T."/>
            <person name="Kobayashi M."/>
            <person name="Okazaki T."/>
            <person name="Ohara I."/>
            <person name="Nakayama I."/>
        </authorList>
    </citation>
    <scope>NUCLEOTIDE SEQUENCE [LARGE SCALE GENOMIC DNA]</scope>
    <source>
        <strain>U-51</strain>
    </source>
</reference>
<organism>
    <name type="scientific">Pyropia yezoensis</name>
    <name type="common">Susabi-nori</name>
    <name type="synonym">Porphyra yezoensis</name>
    <dbReference type="NCBI Taxonomy" id="2788"/>
    <lineage>
        <taxon>Eukaryota</taxon>
        <taxon>Rhodophyta</taxon>
        <taxon>Bangiophyceae</taxon>
        <taxon>Bangiales</taxon>
        <taxon>Bangiaceae</taxon>
        <taxon>Pyropia</taxon>
    </lineage>
</organism>
<proteinExistence type="inferred from homology"/>
<comment type="subunit">
    <text>Part of the 30S ribosomal subunit.</text>
</comment>
<comment type="subcellular location">
    <subcellularLocation>
        <location>Plastid</location>
        <location>Chloroplast</location>
    </subcellularLocation>
</comment>
<comment type="similarity">
    <text evidence="1">Belongs to the bacterial ribosomal protein bS18 family.</text>
</comment>
<name>RR18_PYRYE</name>
<feature type="chain" id="PRO_0000276896" description="Small ribosomal subunit protein bS18c">
    <location>
        <begin position="1"/>
        <end position="70"/>
    </location>
</feature>
<accession>Q1XDN1</accession>
<protein>
    <recommendedName>
        <fullName evidence="1">Small ribosomal subunit protein bS18c</fullName>
    </recommendedName>
    <alternativeName>
        <fullName evidence="2">30S ribosomal protein S18, chloroplastic</fullName>
    </alternativeName>
</protein>
<gene>
    <name evidence="1" type="primary">rps18</name>
</gene>
<dbReference type="EMBL" id="AP006715">
    <property type="protein sequence ID" value="BAE92380.1"/>
    <property type="molecule type" value="Genomic_DNA"/>
</dbReference>
<dbReference type="RefSeq" id="YP_536937.1">
    <property type="nucleotide sequence ID" value="NC_007932.1"/>
</dbReference>
<dbReference type="SMR" id="Q1XDN1"/>
<dbReference type="GeneID" id="3978987"/>
<dbReference type="GO" id="GO:0009507">
    <property type="term" value="C:chloroplast"/>
    <property type="evidence" value="ECO:0007669"/>
    <property type="project" value="UniProtKB-SubCell"/>
</dbReference>
<dbReference type="GO" id="GO:0005763">
    <property type="term" value="C:mitochondrial small ribosomal subunit"/>
    <property type="evidence" value="ECO:0007669"/>
    <property type="project" value="TreeGrafter"/>
</dbReference>
<dbReference type="GO" id="GO:0070181">
    <property type="term" value="F:small ribosomal subunit rRNA binding"/>
    <property type="evidence" value="ECO:0007669"/>
    <property type="project" value="TreeGrafter"/>
</dbReference>
<dbReference type="GO" id="GO:0003735">
    <property type="term" value="F:structural constituent of ribosome"/>
    <property type="evidence" value="ECO:0007669"/>
    <property type="project" value="InterPro"/>
</dbReference>
<dbReference type="GO" id="GO:0006412">
    <property type="term" value="P:translation"/>
    <property type="evidence" value="ECO:0007669"/>
    <property type="project" value="UniProtKB-UniRule"/>
</dbReference>
<dbReference type="FunFam" id="4.10.640.10:FF:000002">
    <property type="entry name" value="30S ribosomal protein S18, chloroplastic"/>
    <property type="match status" value="1"/>
</dbReference>
<dbReference type="Gene3D" id="4.10.640.10">
    <property type="entry name" value="Ribosomal protein S18"/>
    <property type="match status" value="1"/>
</dbReference>
<dbReference type="HAMAP" id="MF_00270">
    <property type="entry name" value="Ribosomal_bS18"/>
    <property type="match status" value="1"/>
</dbReference>
<dbReference type="InterPro" id="IPR001648">
    <property type="entry name" value="Ribosomal_bS18"/>
</dbReference>
<dbReference type="InterPro" id="IPR018275">
    <property type="entry name" value="Ribosomal_bS18_CS"/>
</dbReference>
<dbReference type="InterPro" id="IPR036870">
    <property type="entry name" value="Ribosomal_bS18_sf"/>
</dbReference>
<dbReference type="NCBIfam" id="TIGR00165">
    <property type="entry name" value="S18"/>
    <property type="match status" value="1"/>
</dbReference>
<dbReference type="PANTHER" id="PTHR13479">
    <property type="entry name" value="30S RIBOSOMAL PROTEIN S18"/>
    <property type="match status" value="1"/>
</dbReference>
<dbReference type="PANTHER" id="PTHR13479:SF40">
    <property type="entry name" value="SMALL RIBOSOMAL SUBUNIT PROTEIN BS18M"/>
    <property type="match status" value="1"/>
</dbReference>
<dbReference type="Pfam" id="PF01084">
    <property type="entry name" value="Ribosomal_S18"/>
    <property type="match status" value="1"/>
</dbReference>
<dbReference type="PRINTS" id="PR00974">
    <property type="entry name" value="RIBOSOMALS18"/>
</dbReference>
<dbReference type="SUPFAM" id="SSF46911">
    <property type="entry name" value="Ribosomal protein S18"/>
    <property type="match status" value="1"/>
</dbReference>
<dbReference type="PROSITE" id="PS00057">
    <property type="entry name" value="RIBOSOMAL_S18"/>
    <property type="match status" value="1"/>
</dbReference>
<evidence type="ECO:0000255" key="1">
    <source>
        <dbReference type="HAMAP-Rule" id="MF_00270"/>
    </source>
</evidence>
<evidence type="ECO:0000305" key="2"/>
<sequence>MAIYRNRISPIKPTDAVDYKDIDLLRKFITEQGKILPKRSTGLTSKQQKKLTKAIKQARILSLLPFLNKD</sequence>